<organism>
    <name type="scientific">Aspergillus oryzae (strain ATCC 42149 / RIB 40)</name>
    <name type="common">Yellow koji mold</name>
    <dbReference type="NCBI Taxonomy" id="510516"/>
    <lineage>
        <taxon>Eukaryota</taxon>
        <taxon>Fungi</taxon>
        <taxon>Dikarya</taxon>
        <taxon>Ascomycota</taxon>
        <taxon>Pezizomycotina</taxon>
        <taxon>Eurotiomycetes</taxon>
        <taxon>Eurotiomycetidae</taxon>
        <taxon>Eurotiales</taxon>
        <taxon>Aspergillaceae</taxon>
        <taxon>Aspergillus</taxon>
        <taxon>Aspergillus subgen. Circumdati</taxon>
    </lineage>
</organism>
<gene>
    <name type="ORF">AO090009000186</name>
</gene>
<reference key="1">
    <citation type="journal article" date="2005" name="Nature">
        <title>Genome sequencing and analysis of Aspergillus oryzae.</title>
        <authorList>
            <person name="Machida M."/>
            <person name="Asai K."/>
            <person name="Sano M."/>
            <person name="Tanaka T."/>
            <person name="Kumagai T."/>
            <person name="Terai G."/>
            <person name="Kusumoto K."/>
            <person name="Arima T."/>
            <person name="Akita O."/>
            <person name="Kashiwagi Y."/>
            <person name="Abe K."/>
            <person name="Gomi K."/>
            <person name="Horiuchi H."/>
            <person name="Kitamoto K."/>
            <person name="Kobayashi T."/>
            <person name="Takeuchi M."/>
            <person name="Denning D.W."/>
            <person name="Galagan J.E."/>
            <person name="Nierman W.C."/>
            <person name="Yu J."/>
            <person name="Archer D.B."/>
            <person name="Bennett J.W."/>
            <person name="Bhatnagar D."/>
            <person name="Cleveland T.E."/>
            <person name="Fedorova N.D."/>
            <person name="Gotoh O."/>
            <person name="Horikawa H."/>
            <person name="Hosoyama A."/>
            <person name="Ichinomiya M."/>
            <person name="Igarashi R."/>
            <person name="Iwashita K."/>
            <person name="Juvvadi P.R."/>
            <person name="Kato M."/>
            <person name="Kato Y."/>
            <person name="Kin T."/>
            <person name="Kokubun A."/>
            <person name="Maeda H."/>
            <person name="Maeyama N."/>
            <person name="Maruyama J."/>
            <person name="Nagasaki H."/>
            <person name="Nakajima T."/>
            <person name="Oda K."/>
            <person name="Okada K."/>
            <person name="Paulsen I."/>
            <person name="Sakamoto K."/>
            <person name="Sawano T."/>
            <person name="Takahashi M."/>
            <person name="Takase K."/>
            <person name="Terabayashi Y."/>
            <person name="Wortman J.R."/>
            <person name="Yamada O."/>
            <person name="Yamagata Y."/>
            <person name="Anazawa H."/>
            <person name="Hata Y."/>
            <person name="Koide Y."/>
            <person name="Komori T."/>
            <person name="Koyama Y."/>
            <person name="Minetoki T."/>
            <person name="Suharnan S."/>
            <person name="Tanaka A."/>
            <person name="Isono K."/>
            <person name="Kuhara S."/>
            <person name="Ogasawara N."/>
            <person name="Kikuchi H."/>
        </authorList>
    </citation>
    <scope>NUCLEOTIDE SEQUENCE [LARGE SCALE GENOMIC DNA]</scope>
    <source>
        <strain>ATCC 42149 / RIB 40</strain>
    </source>
</reference>
<evidence type="ECO:0000250" key="1">
    <source>
        <dbReference type="UniProtKB" id="Q12510"/>
    </source>
</evidence>
<evidence type="ECO:0000255" key="2"/>
<evidence type="ECO:0000256" key="3">
    <source>
        <dbReference type="SAM" id="MobiDB-lite"/>
    </source>
</evidence>
<evidence type="ECO:0000305" key="4"/>
<comment type="function">
    <text evidence="1">DNA-binding protein that binds to both single- and double-stranded DNA. Binds preferentially to UV-damaged DNA. May be involved in DNA-metabolic processes.</text>
</comment>
<comment type="similarity">
    <text evidence="4">Belongs to the WD repeat DDB2/WDR76 family.</text>
</comment>
<sequence>MGNEEISDFEKQRLANIAERDALLKQLSLNAQSVFTPTLPNRATGSQAKTKKKPAPKKVKKEEESPAPRRMSSRLRGIAADSEVAKRKAEEQHQAYQEAERAKRVRKSDSFSLNDIFVSGQKLSGDGLLGVDVVTKGVAVPYQRTFGDDDIKKTTDKELKALRKEMSELQLWEAWEPNRIKLTPERVYTMTFHPSETKPLIFAGDKMGHLGILDASQEKPTSVKQEDEDEEDDDPDPVLTTLKPHTRTISSMVIHPSKPTHLYTASYDSSIREMDLDKTTSVERYAPDSTSDDVPLSGLDMAADDPNTLYWTTLEGEFGRYDMRTPKQGSVAVWSLSEKKIGGFSLFPTHSHYFATASLDRTMRLWDIRKLSRREPVPVGEHQSRLSVSHAAFNSAGQVATSSYDDSLKLYDFGAKGIASWKPGHTLSDAEMKPDTVVRHNCQTGRWVTILRPQWQINPQSHIQRFCIGNMNRFVDVYSSSGDQLAQLGGDGITAVPAVAVFHRSKNWIAGGTASGKICLWM</sequence>
<feature type="chain" id="PRO_0000351100" description="DNA damage-binding protein cmr1">
    <location>
        <begin position="1"/>
        <end position="522"/>
    </location>
</feature>
<feature type="repeat" description="WD 1" evidence="2">
    <location>
        <begin position="182"/>
        <end position="223"/>
    </location>
</feature>
<feature type="repeat" description="WD 2" evidence="2">
    <location>
        <begin position="244"/>
        <end position="284"/>
    </location>
</feature>
<feature type="repeat" description="WD 3" evidence="2">
    <location>
        <begin position="294"/>
        <end position="331"/>
    </location>
</feature>
<feature type="repeat" description="WD 4" evidence="2">
    <location>
        <begin position="336"/>
        <end position="376"/>
    </location>
</feature>
<feature type="repeat" description="WD 5" evidence="2">
    <location>
        <begin position="381"/>
        <end position="422"/>
    </location>
</feature>
<feature type="repeat" description="WD 6" evidence="2">
    <location>
        <begin position="445"/>
        <end position="488"/>
    </location>
</feature>
<feature type="repeat" description="WD 7" evidence="2">
    <location>
        <begin position="491"/>
        <end position="522"/>
    </location>
</feature>
<feature type="region of interest" description="Disordered" evidence="3">
    <location>
        <begin position="34"/>
        <end position="89"/>
    </location>
</feature>
<feature type="region of interest" description="Disordered" evidence="3">
    <location>
        <begin position="217"/>
        <end position="239"/>
    </location>
</feature>
<feature type="compositionally biased region" description="Polar residues" evidence="3">
    <location>
        <begin position="34"/>
        <end position="47"/>
    </location>
</feature>
<feature type="compositionally biased region" description="Basic residues" evidence="3">
    <location>
        <begin position="49"/>
        <end position="59"/>
    </location>
</feature>
<feature type="compositionally biased region" description="Acidic residues" evidence="3">
    <location>
        <begin position="226"/>
        <end position="236"/>
    </location>
</feature>
<dbReference type="EMBL" id="BA000049">
    <property type="protein sequence ID" value="BAE54681.1"/>
    <property type="molecule type" value="Genomic_DNA"/>
</dbReference>
<dbReference type="RefSeq" id="XP_001816683.3">
    <property type="nucleotide sequence ID" value="XM_001816631.3"/>
</dbReference>
<dbReference type="SMR" id="Q2UUT4"/>
<dbReference type="STRING" id="510516.Q2UUT4"/>
<dbReference type="EnsemblFungi" id="BAE54681">
    <property type="protein sequence ID" value="BAE54681"/>
    <property type="gene ID" value="AO090009000186"/>
</dbReference>
<dbReference type="GeneID" id="5988613"/>
<dbReference type="VEuPathDB" id="FungiDB:AO090009000186"/>
<dbReference type="HOGENOM" id="CLU_017019_1_1_1"/>
<dbReference type="OMA" id="DPNTLYW"/>
<dbReference type="Proteomes" id="UP000006564">
    <property type="component" value="Chromosome 1"/>
</dbReference>
<dbReference type="GO" id="GO:0005634">
    <property type="term" value="C:nucleus"/>
    <property type="evidence" value="ECO:0007669"/>
    <property type="project" value="TreeGrafter"/>
</dbReference>
<dbReference type="GO" id="GO:0003677">
    <property type="term" value="F:DNA binding"/>
    <property type="evidence" value="ECO:0007669"/>
    <property type="project" value="UniProtKB-KW"/>
</dbReference>
<dbReference type="GO" id="GO:0006974">
    <property type="term" value="P:DNA damage response"/>
    <property type="evidence" value="ECO:0007669"/>
    <property type="project" value="UniProtKB-KW"/>
</dbReference>
<dbReference type="GO" id="GO:2000001">
    <property type="term" value="P:regulation of DNA damage checkpoint"/>
    <property type="evidence" value="ECO:0007669"/>
    <property type="project" value="TreeGrafter"/>
</dbReference>
<dbReference type="FunFam" id="2.130.10.10:FF:000562">
    <property type="entry name" value="DNA damage-binding protein CMR1"/>
    <property type="match status" value="1"/>
</dbReference>
<dbReference type="Gene3D" id="2.130.10.10">
    <property type="entry name" value="YVTN repeat-like/Quinoprotein amine dehydrogenase"/>
    <property type="match status" value="1"/>
</dbReference>
<dbReference type="InterPro" id="IPR015943">
    <property type="entry name" value="WD40/YVTN_repeat-like_dom_sf"/>
</dbReference>
<dbReference type="InterPro" id="IPR036322">
    <property type="entry name" value="WD40_repeat_dom_sf"/>
</dbReference>
<dbReference type="InterPro" id="IPR001680">
    <property type="entry name" value="WD40_rpt"/>
</dbReference>
<dbReference type="InterPro" id="IPR050853">
    <property type="entry name" value="WD_repeat_DNA-damage-binding"/>
</dbReference>
<dbReference type="PANTHER" id="PTHR14773">
    <property type="entry name" value="WD REPEAT-CONTAINING PROTEIN 76"/>
    <property type="match status" value="1"/>
</dbReference>
<dbReference type="PANTHER" id="PTHR14773:SF0">
    <property type="entry name" value="WD REPEAT-CONTAINING PROTEIN 76"/>
    <property type="match status" value="1"/>
</dbReference>
<dbReference type="Pfam" id="PF00400">
    <property type="entry name" value="WD40"/>
    <property type="match status" value="3"/>
</dbReference>
<dbReference type="SMART" id="SM00320">
    <property type="entry name" value="WD40"/>
    <property type="match status" value="4"/>
</dbReference>
<dbReference type="SUPFAM" id="SSF50978">
    <property type="entry name" value="WD40 repeat-like"/>
    <property type="match status" value="1"/>
</dbReference>
<dbReference type="PROSITE" id="PS50082">
    <property type="entry name" value="WD_REPEATS_2"/>
    <property type="match status" value="1"/>
</dbReference>
<dbReference type="PROSITE" id="PS50294">
    <property type="entry name" value="WD_REPEATS_REGION"/>
    <property type="match status" value="1"/>
</dbReference>
<protein>
    <recommendedName>
        <fullName evidence="1">DNA damage-binding protein cmr1</fullName>
    </recommendedName>
</protein>
<accession>Q2UUT4</accession>
<name>CMR1_ASPOR</name>
<keyword id="KW-0227">DNA damage</keyword>
<keyword id="KW-0238">DNA-binding</keyword>
<keyword id="KW-1185">Reference proteome</keyword>
<keyword id="KW-0677">Repeat</keyword>
<keyword id="KW-0853">WD repeat</keyword>
<proteinExistence type="inferred from homology"/>